<accession>Q7DDH4</accession>
<gene>
    <name type="ordered locus">NMB1126</name>
</gene>
<gene>
    <name type="ordered locus">NMB1164</name>
</gene>
<dbReference type="EMBL" id="AE002098">
    <property type="protein sequence ID" value="AAF41514.1"/>
    <property type="molecule type" value="Genomic_DNA"/>
</dbReference>
<dbReference type="EMBL" id="AE002098">
    <property type="protein sequence ID" value="AAF41549.1"/>
    <property type="molecule type" value="Genomic_DNA"/>
</dbReference>
<dbReference type="PIR" id="F81120">
    <property type="entry name" value="F81120"/>
</dbReference>
<dbReference type="RefSeq" id="NP_274155.1">
    <property type="nucleotide sequence ID" value="NC_003112.2"/>
</dbReference>
<dbReference type="RefSeq" id="NP_274191.1">
    <property type="nucleotide sequence ID" value="NC_003112.2"/>
</dbReference>
<dbReference type="RefSeq" id="WP_002217215.1">
    <property type="nucleotide sequence ID" value="NC_003112.2"/>
</dbReference>
<dbReference type="SMR" id="Q7DDH4"/>
<dbReference type="STRING" id="122586.NMB1126"/>
<dbReference type="PaxDb" id="122586-NMB1126"/>
<dbReference type="KEGG" id="nme:NMB1126"/>
<dbReference type="KEGG" id="nme:NMB1164"/>
<dbReference type="PATRIC" id="fig|122586.8.peg.1428"/>
<dbReference type="HOGENOM" id="CLU_074310_1_0_4"/>
<dbReference type="InParanoid" id="Q7DDH4"/>
<dbReference type="OrthoDB" id="9793163at2"/>
<dbReference type="Proteomes" id="UP000000425">
    <property type="component" value="Chromosome"/>
</dbReference>
<dbReference type="GO" id="GO:0030288">
    <property type="term" value="C:outer membrane-bounded periplasmic space"/>
    <property type="evidence" value="ECO:0007669"/>
    <property type="project" value="InterPro"/>
</dbReference>
<dbReference type="GO" id="GO:0005886">
    <property type="term" value="C:plasma membrane"/>
    <property type="evidence" value="ECO:0007669"/>
    <property type="project" value="UniProtKB-SubCell"/>
</dbReference>
<dbReference type="Gene3D" id="3.40.50.10610">
    <property type="entry name" value="ABC-type transport auxiliary lipoprotein component"/>
    <property type="match status" value="1"/>
</dbReference>
<dbReference type="InterPro" id="IPR005534">
    <property type="entry name" value="Curli_assmbl/transp-comp_CsgG"/>
</dbReference>
<dbReference type="PANTHER" id="PTHR41164">
    <property type="entry name" value="CURLI PRODUCTION ASSEMBLY/TRANSPORT COMPONENT CSGG"/>
    <property type="match status" value="1"/>
</dbReference>
<dbReference type="PANTHER" id="PTHR41164:SF1">
    <property type="entry name" value="CURLI PRODUCTION ASSEMBLY_TRANSPORT COMPONENT CSGG"/>
    <property type="match status" value="1"/>
</dbReference>
<dbReference type="Pfam" id="PF03783">
    <property type="entry name" value="CsgG"/>
    <property type="match status" value="1"/>
</dbReference>
<dbReference type="SUPFAM" id="SSF52964">
    <property type="entry name" value="TolB, N-terminal domain"/>
    <property type="match status" value="1"/>
</dbReference>
<dbReference type="PROSITE" id="PS51257">
    <property type="entry name" value="PROKAR_LIPOPROTEIN"/>
    <property type="match status" value="1"/>
</dbReference>
<name>Y1126_NEIMB</name>
<feature type="signal peptide" evidence="1">
    <location>
        <begin position="1"/>
        <end position="19"/>
    </location>
</feature>
<feature type="chain" id="PRO_0000320332" description="Putative lipoprotein NMB1126/NMB1164">
    <location>
        <begin position="20"/>
        <end position="223"/>
    </location>
</feature>
<feature type="lipid moiety-binding region" description="N-palmitoyl cysteine" evidence="1">
    <location>
        <position position="20"/>
    </location>
</feature>
<feature type="lipid moiety-binding region" description="S-diacylglycerol cysteine" evidence="1">
    <location>
        <position position="20"/>
    </location>
</feature>
<comment type="subcellular location">
    <subcellularLocation>
        <location evidence="1">Cell membrane</location>
        <topology evidence="1">Lipid-anchor</topology>
    </subcellularLocation>
</comment>
<comment type="miscellaneous">
    <text>Present in outer membrane vesicle formulations which are used as vaccines in human.</text>
</comment>
<keyword id="KW-1003">Cell membrane</keyword>
<keyword id="KW-0449">Lipoprotein</keyword>
<keyword id="KW-0472">Membrane</keyword>
<keyword id="KW-0564">Palmitate</keyword>
<keyword id="KW-1185">Reference proteome</keyword>
<keyword id="KW-0732">Signal</keyword>
<proteinExistence type="evidence at protein level"/>
<protein>
    <recommendedName>
        <fullName>Putative lipoprotein NMB1126/NMB1164</fullName>
    </recommendedName>
</protein>
<organism>
    <name type="scientific">Neisseria meningitidis serogroup B (strain ATCC BAA-335 / MC58)</name>
    <dbReference type="NCBI Taxonomy" id="122586"/>
    <lineage>
        <taxon>Bacteria</taxon>
        <taxon>Pseudomonadati</taxon>
        <taxon>Pseudomonadota</taxon>
        <taxon>Betaproteobacteria</taxon>
        <taxon>Neisseriales</taxon>
        <taxon>Neisseriaceae</taxon>
        <taxon>Neisseria</taxon>
    </lineage>
</organism>
<sequence>MKTVSTAVVLAAAAVSLTGCATESSRSLEVEKVASYNTQYHGVRTPISVGTFDNRSSFQKGIFSDGEDRLGSQAKTILVTHLQQTNRFNVLNRTNLNALKQESGISGKAHNLKGADYVVTGDVTEFGRRDVGDHQLFGILGRGKSQIAYAKVALNIVNVNTSEIVYSAQGAGEYALSNREIIGFGGTSGYDATLNGKVLDLAIREAVNSLVQAVDNGAWQPNR</sequence>
<reference key="1">
    <citation type="journal article" date="2000" name="Science">
        <title>Complete genome sequence of Neisseria meningitidis serogroup B strain MC58.</title>
        <authorList>
            <person name="Tettelin H."/>
            <person name="Saunders N.J."/>
            <person name="Heidelberg J.F."/>
            <person name="Jeffries A.C."/>
            <person name="Nelson K.E."/>
            <person name="Eisen J.A."/>
            <person name="Ketchum K.A."/>
            <person name="Hood D.W."/>
            <person name="Peden J.F."/>
            <person name="Dodson R.J."/>
            <person name="Nelson W.C."/>
            <person name="Gwinn M.L."/>
            <person name="DeBoy R.T."/>
            <person name="Peterson J.D."/>
            <person name="Hickey E.K."/>
            <person name="Haft D.H."/>
            <person name="Salzberg S.L."/>
            <person name="White O."/>
            <person name="Fleischmann R.D."/>
            <person name="Dougherty B.A."/>
            <person name="Mason T.M."/>
            <person name="Ciecko A."/>
            <person name="Parksey D.S."/>
            <person name="Blair E."/>
            <person name="Cittone H."/>
            <person name="Clark E.B."/>
            <person name="Cotton M.D."/>
            <person name="Utterback T.R."/>
            <person name="Khouri H.M."/>
            <person name="Qin H."/>
            <person name="Vamathevan J.J."/>
            <person name="Gill J."/>
            <person name="Scarlato V."/>
            <person name="Masignani V."/>
            <person name="Pizza M."/>
            <person name="Grandi G."/>
            <person name="Sun L."/>
            <person name="Smith H.O."/>
            <person name="Fraser C.M."/>
            <person name="Moxon E.R."/>
            <person name="Rappuoli R."/>
            <person name="Venter J.C."/>
        </authorList>
    </citation>
    <scope>NUCLEOTIDE SEQUENCE [LARGE SCALE GENOMIC DNA]</scope>
    <source>
        <strain>ATCC BAA-335 / MC58</strain>
    </source>
</reference>
<reference key="2">
    <citation type="journal article" date="2005" name="Hum. Vaccin.">
        <title>Characterization of the protein content of a meningococcal outer membrane vesicle vaccine by polyacrylamide gel electrophoresis and mass spectrometry.</title>
        <authorList>
            <person name="Vipond C."/>
            <person name="Wheeler J.X."/>
            <person name="Jones C."/>
            <person name="Feavers I.M."/>
            <person name="Suker J."/>
        </authorList>
    </citation>
    <scope>IDENTIFICATION BY MASS SPECTROMETRY [LARGE SCALE ANALYSIS]</scope>
</reference>
<reference key="3">
    <citation type="journal article" date="2006" name="Proteomics">
        <title>Proteomic analysis of a meningococcal outer membrane vesicle vaccine prepared from the group B strain NZ98/254.</title>
        <authorList>
            <person name="Vipond C."/>
            <person name="Suker J."/>
            <person name="Jones C."/>
            <person name="Tang C."/>
            <person name="Feavers I.M."/>
            <person name="Wheeler J.X."/>
        </authorList>
    </citation>
    <scope>IDENTIFICATION BY MASS SPECTROMETRY [LARGE SCALE ANALYSIS]</scope>
    <source>
        <strain>NZ98/254 / Serogroup B</strain>
    </source>
</reference>
<evidence type="ECO:0000255" key="1">
    <source>
        <dbReference type="PROSITE-ProRule" id="PRU00303"/>
    </source>
</evidence>